<organism>
    <name type="scientific">Bos taurus</name>
    <name type="common">Bovine</name>
    <dbReference type="NCBI Taxonomy" id="9913"/>
    <lineage>
        <taxon>Eukaryota</taxon>
        <taxon>Metazoa</taxon>
        <taxon>Chordata</taxon>
        <taxon>Craniata</taxon>
        <taxon>Vertebrata</taxon>
        <taxon>Euteleostomi</taxon>
        <taxon>Mammalia</taxon>
        <taxon>Eutheria</taxon>
        <taxon>Laurasiatheria</taxon>
        <taxon>Artiodactyla</taxon>
        <taxon>Ruminantia</taxon>
        <taxon>Pecora</taxon>
        <taxon>Bovidae</taxon>
        <taxon>Bovinae</taxon>
        <taxon>Bos</taxon>
    </lineage>
</organism>
<name>CATS_BOVIN</name>
<keyword id="KW-0968">Cytoplasmic vesicle</keyword>
<keyword id="KW-0903">Direct protein sequencing</keyword>
<keyword id="KW-1015">Disulfide bond</keyword>
<keyword id="KW-0325">Glycoprotein</keyword>
<keyword id="KW-0378">Hydrolase</keyword>
<keyword id="KW-0458">Lysosome</keyword>
<keyword id="KW-0645">Protease</keyword>
<keyword id="KW-1185">Reference proteome</keyword>
<keyword id="KW-0964">Secreted</keyword>
<keyword id="KW-0732">Signal</keyword>
<keyword id="KW-0788">Thiol protease</keyword>
<keyword id="KW-0865">Zymogen</keyword>
<evidence type="ECO:0000250" key="1"/>
<evidence type="ECO:0000250" key="2">
    <source>
        <dbReference type="UniProtKB" id="P25774"/>
    </source>
</evidence>
<evidence type="ECO:0000255" key="3"/>
<evidence type="ECO:0000255" key="4">
    <source>
        <dbReference type="PROSITE-ProRule" id="PRU10088"/>
    </source>
</evidence>
<evidence type="ECO:0000255" key="5">
    <source>
        <dbReference type="PROSITE-ProRule" id="PRU10089"/>
    </source>
</evidence>
<evidence type="ECO:0000255" key="6">
    <source>
        <dbReference type="PROSITE-ProRule" id="PRU10090"/>
    </source>
</evidence>
<evidence type="ECO:0000269" key="7">
    <source>
    </source>
</evidence>
<evidence type="ECO:0000269" key="8">
    <source>
    </source>
</evidence>
<evidence type="ECO:0000269" key="9">
    <source>
    </source>
</evidence>
<dbReference type="EC" id="3.4.22.27"/>
<dbReference type="EMBL" id="BC102245">
    <property type="protein sequence ID" value="AAI02246.1"/>
    <property type="molecule type" value="mRNA"/>
</dbReference>
<dbReference type="EMBL" id="M95211">
    <property type="protein sequence ID" value="AAA30435.1"/>
    <property type="molecule type" value="mRNA"/>
</dbReference>
<dbReference type="EMBL" id="X62001">
    <property type="protein sequence ID" value="CAA43971.1"/>
    <property type="molecule type" value="mRNA"/>
</dbReference>
<dbReference type="PIR" id="S15844">
    <property type="entry name" value="S15844"/>
</dbReference>
<dbReference type="RefSeq" id="NP_001028787.1">
    <property type="nucleotide sequence ID" value="NM_001033615.2"/>
</dbReference>
<dbReference type="RefSeq" id="XP_010801305.1">
    <property type="nucleotide sequence ID" value="XM_010803003.4"/>
</dbReference>
<dbReference type="RefSeq" id="XP_010801306.1">
    <property type="nucleotide sequence ID" value="XM_010803004.4"/>
</dbReference>
<dbReference type="SMR" id="P25326"/>
<dbReference type="FunCoup" id="P25326">
    <property type="interactions" value="700"/>
</dbReference>
<dbReference type="STRING" id="9913.ENSBTAP00000022774"/>
<dbReference type="GlyCosmos" id="P25326">
    <property type="glycosylation" value="1 site, No reported glycans"/>
</dbReference>
<dbReference type="GlyGen" id="P25326">
    <property type="glycosylation" value="1 site"/>
</dbReference>
<dbReference type="PaxDb" id="9913-ENSBTAP00000022774"/>
<dbReference type="GeneID" id="327711"/>
<dbReference type="KEGG" id="bta:327711"/>
<dbReference type="CTD" id="1520"/>
<dbReference type="VEuPathDB" id="HostDB:ENSBTAG00000017135"/>
<dbReference type="eggNOG" id="KOG1543">
    <property type="taxonomic scope" value="Eukaryota"/>
</dbReference>
<dbReference type="HOGENOM" id="CLU_012184_1_2_1"/>
<dbReference type="InParanoid" id="P25326"/>
<dbReference type="OMA" id="KSNPNQM"/>
<dbReference type="OrthoDB" id="190265at2759"/>
<dbReference type="TreeFam" id="TF313739"/>
<dbReference type="Reactome" id="R-BTA-1474228">
    <property type="pathway name" value="Degradation of the extracellular matrix"/>
</dbReference>
<dbReference type="Reactome" id="R-BTA-1679131">
    <property type="pathway name" value="Trafficking and processing of endosomal TLR"/>
</dbReference>
<dbReference type="Reactome" id="R-BTA-2132295">
    <property type="pathway name" value="MHC class II antigen presentation"/>
</dbReference>
<dbReference type="Reactome" id="R-BTA-6798695">
    <property type="pathway name" value="Neutrophil degranulation"/>
</dbReference>
<dbReference type="Proteomes" id="UP000009136">
    <property type="component" value="Chromosome 3"/>
</dbReference>
<dbReference type="Bgee" id="ENSBTAG00000017135">
    <property type="expression patterns" value="Expressed in monocyte and 106 other cell types or tissues"/>
</dbReference>
<dbReference type="GO" id="GO:0005615">
    <property type="term" value="C:extracellular space"/>
    <property type="evidence" value="ECO:0000250"/>
    <property type="project" value="UniProtKB"/>
</dbReference>
<dbReference type="GO" id="GO:0005764">
    <property type="term" value="C:lysosome"/>
    <property type="evidence" value="ECO:0000318"/>
    <property type="project" value="GO_Central"/>
</dbReference>
<dbReference type="GO" id="GO:0045335">
    <property type="term" value="C:phagocytic vesicle"/>
    <property type="evidence" value="ECO:0000250"/>
    <property type="project" value="UniProtKB"/>
</dbReference>
<dbReference type="GO" id="GO:0004197">
    <property type="term" value="F:cysteine-type endopeptidase activity"/>
    <property type="evidence" value="ECO:0000318"/>
    <property type="project" value="GO_Central"/>
</dbReference>
<dbReference type="GO" id="GO:0019886">
    <property type="term" value="P:antigen processing and presentation of exogenous peptide antigen via MHC class II"/>
    <property type="evidence" value="ECO:0000250"/>
    <property type="project" value="UniProtKB"/>
</dbReference>
<dbReference type="GO" id="GO:0051603">
    <property type="term" value="P:proteolysis involved in protein catabolic process"/>
    <property type="evidence" value="ECO:0000318"/>
    <property type="project" value="GO_Central"/>
</dbReference>
<dbReference type="CDD" id="cd02248">
    <property type="entry name" value="Peptidase_C1A"/>
    <property type="match status" value="1"/>
</dbReference>
<dbReference type="FunFam" id="3.90.70.10:FF:000006">
    <property type="entry name" value="Cathepsin S"/>
    <property type="match status" value="1"/>
</dbReference>
<dbReference type="Gene3D" id="3.90.70.10">
    <property type="entry name" value="Cysteine proteinases"/>
    <property type="match status" value="1"/>
</dbReference>
<dbReference type="InterPro" id="IPR038765">
    <property type="entry name" value="Papain-like_cys_pep_sf"/>
</dbReference>
<dbReference type="InterPro" id="IPR025661">
    <property type="entry name" value="Pept_asp_AS"/>
</dbReference>
<dbReference type="InterPro" id="IPR000169">
    <property type="entry name" value="Pept_cys_AS"/>
</dbReference>
<dbReference type="InterPro" id="IPR025660">
    <property type="entry name" value="Pept_his_AS"/>
</dbReference>
<dbReference type="InterPro" id="IPR013128">
    <property type="entry name" value="Peptidase_C1A"/>
</dbReference>
<dbReference type="InterPro" id="IPR000668">
    <property type="entry name" value="Peptidase_C1A_C"/>
</dbReference>
<dbReference type="InterPro" id="IPR039417">
    <property type="entry name" value="Peptidase_C1A_papain-like"/>
</dbReference>
<dbReference type="InterPro" id="IPR013201">
    <property type="entry name" value="Prot_inhib_I29"/>
</dbReference>
<dbReference type="PANTHER" id="PTHR12411">
    <property type="entry name" value="CYSTEINE PROTEASE FAMILY C1-RELATED"/>
    <property type="match status" value="1"/>
</dbReference>
<dbReference type="Pfam" id="PF08246">
    <property type="entry name" value="Inhibitor_I29"/>
    <property type="match status" value="1"/>
</dbReference>
<dbReference type="Pfam" id="PF00112">
    <property type="entry name" value="Peptidase_C1"/>
    <property type="match status" value="1"/>
</dbReference>
<dbReference type="PRINTS" id="PR00705">
    <property type="entry name" value="PAPAIN"/>
</dbReference>
<dbReference type="SMART" id="SM00848">
    <property type="entry name" value="Inhibitor_I29"/>
    <property type="match status" value="1"/>
</dbReference>
<dbReference type="SMART" id="SM00645">
    <property type="entry name" value="Pept_C1"/>
    <property type="match status" value="1"/>
</dbReference>
<dbReference type="SUPFAM" id="SSF54001">
    <property type="entry name" value="Cysteine proteinases"/>
    <property type="match status" value="1"/>
</dbReference>
<dbReference type="PROSITE" id="PS00640">
    <property type="entry name" value="THIOL_PROTEASE_ASN"/>
    <property type="match status" value="1"/>
</dbReference>
<dbReference type="PROSITE" id="PS00139">
    <property type="entry name" value="THIOL_PROTEASE_CYS"/>
    <property type="match status" value="1"/>
</dbReference>
<dbReference type="PROSITE" id="PS00639">
    <property type="entry name" value="THIOL_PROTEASE_HIS"/>
    <property type="match status" value="1"/>
</dbReference>
<accession>P25326</accession>
<accession>Q3T0V8</accession>
<proteinExistence type="evidence at protein level"/>
<feature type="signal peptide" evidence="3">
    <location>
        <begin position="1"/>
        <end position="16"/>
    </location>
</feature>
<feature type="propeptide" id="PRO_0000238120" description="Activation peptide" evidence="7 8 9">
    <location>
        <begin position="17"/>
        <end position="114"/>
    </location>
</feature>
<feature type="chain" id="PRO_0000050543" description="Cathepsin S">
    <location>
        <begin position="115"/>
        <end position="331"/>
    </location>
</feature>
<feature type="active site" evidence="1">
    <location>
        <position position="139"/>
    </location>
</feature>
<feature type="active site" evidence="1">
    <location>
        <position position="278"/>
    </location>
</feature>
<feature type="active site" evidence="1">
    <location>
        <position position="298"/>
    </location>
</feature>
<feature type="glycosylation site" description="N-linked (GlcNAc...) asparagine" evidence="3">
    <location>
        <position position="104"/>
    </location>
</feature>
<feature type="disulfide bond" evidence="1">
    <location>
        <begin position="126"/>
        <end position="224"/>
    </location>
</feature>
<feature type="disulfide bond" evidence="1">
    <location>
        <begin position="136"/>
        <end position="180"/>
    </location>
</feature>
<feature type="disulfide bond" evidence="1">
    <location>
        <begin position="170"/>
        <end position="213"/>
    </location>
</feature>
<feature type="disulfide bond" evidence="1">
    <location>
        <begin position="272"/>
        <end position="320"/>
    </location>
</feature>
<protein>
    <recommendedName>
        <fullName>Cathepsin S</fullName>
        <ecNumber>3.4.22.27</ecNumber>
    </recommendedName>
</protein>
<sequence length="331" mass="37176">MNWLVWALLLCSSAMAHVHRDPTLDHHWDLWKKTYGKQYKEKNEEVARRLIWEKNLKTVTLHNLEHSMGMHSYELGMNHLGDMTSEEVISLMSSLRVPSQWPRNVTYKSDPNQKLPDSMDWREKGCVTEVKYQGACGSCWAFSAVGALEAQVKLKTGKLVSLSAQNLVDCSTAKYGNKGCNGGFMTEAFQYIIDNNGIDSEASYPYKAMDGKCQYDVKNRAATCSRYIELPFGSEEALKEAVANKGPVSVGIDASHSSFFLYKTGVYYDPSCTQNVNHGVLVVGYGNLDGKDYWLVKNSWGLHFGDQGYIRMARNSGNHCGIANYPSYPEI</sequence>
<gene>
    <name type="primary">CTSS</name>
</gene>
<comment type="function">
    <text evidence="2">Thiol protease. Key protease responsible for the removal of the invariant chain from MHC class II molecules and MHC class II antigen presentation. The bond-specificity of this proteinase is in part similar to the specificities of cathepsin L.</text>
</comment>
<comment type="catalytic activity">
    <reaction>
        <text>Similar to cathepsin L, but with much less activity on Z-Phe-Arg-|-NHMec, and more activity on the Z-Val-Val-Arg-|-Xaa compound.</text>
        <dbReference type="EC" id="3.4.22.27"/>
    </reaction>
</comment>
<comment type="subunit">
    <text>Monomer.</text>
</comment>
<comment type="subcellular location">
    <subcellularLocation>
        <location evidence="2">Lysosome</location>
    </subcellularLocation>
    <subcellularLocation>
        <location evidence="2">Secreted</location>
    </subcellularLocation>
    <subcellularLocation>
        <location evidence="2">Cytoplasmic vesicle</location>
        <location evidence="2">Phagosome</location>
    </subcellularLocation>
</comment>
<comment type="similarity">
    <text evidence="4 5 6">Belongs to the peptidase C1 family.</text>
</comment>
<reference key="1">
    <citation type="submission" date="2005-08" db="EMBL/GenBank/DDBJ databases">
        <authorList>
            <consortium name="NIH - Mammalian Gene Collection (MGC) project"/>
        </authorList>
    </citation>
    <scope>NUCLEOTIDE SEQUENCE [LARGE SCALE MRNA]</scope>
    <source>
        <strain>Crossbred X Angus</strain>
        <tissue>Ileum</tissue>
    </source>
</reference>
<reference key="2">
    <citation type="journal article" date="1991" name="FEBS Lett.">
        <title>The complete amino acid sequence of bovine cathepsin S and a partial sequence of bovine cathepsin L.</title>
        <authorList>
            <person name="Ritonja A."/>
            <person name="Colic A."/>
            <person name="Dolenc I."/>
            <person name="Ogrinc T."/>
            <person name="Podobnik M."/>
            <person name="Turk V."/>
        </authorList>
    </citation>
    <scope>PROTEIN SEQUENCE OF 115-331</scope>
    <source>
        <tissue>Spleen</tissue>
    </source>
</reference>
<reference key="3">
    <citation type="journal article" date="1992" name="Biol. Chem. Hoppe-Seyler">
        <title>Bovine cathepsins S and L: isolation and amino acid sequences.</title>
        <authorList>
            <person name="Dolenc I."/>
            <person name="Ritonja A."/>
            <person name="Colic A."/>
            <person name="Podobnik M."/>
            <person name="Ogrinc T."/>
            <person name="Turk V."/>
        </authorList>
    </citation>
    <scope>PROTEIN SEQUENCE OF 115-331</scope>
    <source>
        <tissue>Spleen</tissue>
    </source>
</reference>
<reference key="4">
    <citation type="journal article" date="1991" name="FEBS Lett.">
        <title>Primary structure of bovine cathepsin S. Comparison to cathepsins L, H, B and papain.</title>
        <authorList>
            <person name="Wiederanders B."/>
            <person name="Broemme D."/>
            <person name="Kirschke H."/>
            <person name="Kalkkinen N."/>
            <person name="Rinne A."/>
            <person name="Paquette T."/>
            <person name="Toothman P."/>
        </authorList>
    </citation>
    <scope>PROTEIN SEQUENCE OF 115-331</scope>
    <scope>NUCLEOTIDE SEQUENCE [MRNA] OF 136-331</scope>
    <source>
        <tissue>Spleen</tissue>
    </source>
</reference>
<reference key="5">
    <citation type="journal article" date="1989" name="Biochem. J.">
        <title>The specificity of bovine spleen cathepsin S. A comparison with rat liver cathepsins L and B.</title>
        <authorList>
            <person name="Broemme D."/>
            <person name="Steinert A."/>
            <person name="Friebe S."/>
            <person name="Fittkau S."/>
            <person name="Wiederanders B."/>
            <person name="Kirschke H."/>
        </authorList>
    </citation>
    <scope>CHARACTERIZATION</scope>
</reference>